<protein>
    <recommendedName>
        <fullName evidence="1">Aspartyl/glutamyl-tRNA(Asn/Gln) amidotransferase subunit C</fullName>
        <shortName evidence="1">Asp/Glu-ADT subunit C</shortName>
        <ecNumber evidence="1">6.3.5.-</ecNumber>
    </recommendedName>
</protein>
<dbReference type="EC" id="6.3.5.-" evidence="1"/>
<dbReference type="EMBL" id="CP001581">
    <property type="protein sequence ID" value="ACO85576.1"/>
    <property type="molecule type" value="Genomic_DNA"/>
</dbReference>
<dbReference type="RefSeq" id="WP_003357679.1">
    <property type="nucleotide sequence ID" value="NC_012563.1"/>
</dbReference>
<dbReference type="SMR" id="C1FLE0"/>
<dbReference type="GeneID" id="92940009"/>
<dbReference type="KEGG" id="cby:CLM_3701"/>
<dbReference type="eggNOG" id="COG0721">
    <property type="taxonomic scope" value="Bacteria"/>
</dbReference>
<dbReference type="HOGENOM" id="CLU_105899_2_1_9"/>
<dbReference type="Proteomes" id="UP000001374">
    <property type="component" value="Chromosome"/>
</dbReference>
<dbReference type="GO" id="GO:0050566">
    <property type="term" value="F:asparaginyl-tRNA synthase (glutamine-hydrolyzing) activity"/>
    <property type="evidence" value="ECO:0007669"/>
    <property type="project" value="RHEA"/>
</dbReference>
<dbReference type="GO" id="GO:0005524">
    <property type="term" value="F:ATP binding"/>
    <property type="evidence" value="ECO:0007669"/>
    <property type="project" value="UniProtKB-KW"/>
</dbReference>
<dbReference type="GO" id="GO:0050567">
    <property type="term" value="F:glutaminyl-tRNA synthase (glutamine-hydrolyzing) activity"/>
    <property type="evidence" value="ECO:0007669"/>
    <property type="project" value="UniProtKB-UniRule"/>
</dbReference>
<dbReference type="GO" id="GO:0070681">
    <property type="term" value="P:glutaminyl-tRNAGln biosynthesis via transamidation"/>
    <property type="evidence" value="ECO:0007669"/>
    <property type="project" value="TreeGrafter"/>
</dbReference>
<dbReference type="GO" id="GO:0006450">
    <property type="term" value="P:regulation of translational fidelity"/>
    <property type="evidence" value="ECO:0007669"/>
    <property type="project" value="InterPro"/>
</dbReference>
<dbReference type="GO" id="GO:0006412">
    <property type="term" value="P:translation"/>
    <property type="evidence" value="ECO:0007669"/>
    <property type="project" value="UniProtKB-UniRule"/>
</dbReference>
<dbReference type="Gene3D" id="1.10.20.60">
    <property type="entry name" value="Glu-tRNAGln amidotransferase C subunit, N-terminal domain"/>
    <property type="match status" value="1"/>
</dbReference>
<dbReference type="HAMAP" id="MF_00122">
    <property type="entry name" value="GatC"/>
    <property type="match status" value="1"/>
</dbReference>
<dbReference type="InterPro" id="IPR036113">
    <property type="entry name" value="Asp/Glu-ADT_sf_sub_c"/>
</dbReference>
<dbReference type="InterPro" id="IPR003837">
    <property type="entry name" value="GatC"/>
</dbReference>
<dbReference type="NCBIfam" id="TIGR00135">
    <property type="entry name" value="gatC"/>
    <property type="match status" value="1"/>
</dbReference>
<dbReference type="PANTHER" id="PTHR15004">
    <property type="entry name" value="GLUTAMYL-TRNA(GLN) AMIDOTRANSFERASE SUBUNIT C, MITOCHONDRIAL"/>
    <property type="match status" value="1"/>
</dbReference>
<dbReference type="PANTHER" id="PTHR15004:SF0">
    <property type="entry name" value="GLUTAMYL-TRNA(GLN) AMIDOTRANSFERASE SUBUNIT C, MITOCHONDRIAL"/>
    <property type="match status" value="1"/>
</dbReference>
<dbReference type="Pfam" id="PF02686">
    <property type="entry name" value="GatC"/>
    <property type="match status" value="1"/>
</dbReference>
<dbReference type="SUPFAM" id="SSF141000">
    <property type="entry name" value="Glu-tRNAGln amidotransferase C subunit"/>
    <property type="match status" value="1"/>
</dbReference>
<sequence>MSVSKKDVEYVAELARLEFKEEEKDNFVNDLNKILNYMEKLDELNTDDVDIVVNPYYIENKYREDNVEKSMELKEVIDNAPESLEEYVIVPKVID</sequence>
<organism>
    <name type="scientific">Clostridium botulinum (strain Kyoto / Type A2)</name>
    <dbReference type="NCBI Taxonomy" id="536232"/>
    <lineage>
        <taxon>Bacteria</taxon>
        <taxon>Bacillati</taxon>
        <taxon>Bacillota</taxon>
        <taxon>Clostridia</taxon>
        <taxon>Eubacteriales</taxon>
        <taxon>Clostridiaceae</taxon>
        <taxon>Clostridium</taxon>
    </lineage>
</organism>
<comment type="function">
    <text evidence="1">Allows the formation of correctly charged Asn-tRNA(Asn) or Gln-tRNA(Gln) through the transamidation of misacylated Asp-tRNA(Asn) or Glu-tRNA(Gln) in organisms which lack either or both of asparaginyl-tRNA or glutaminyl-tRNA synthetases. The reaction takes place in the presence of glutamine and ATP through an activated phospho-Asp-tRNA(Asn) or phospho-Glu-tRNA(Gln).</text>
</comment>
<comment type="catalytic activity">
    <reaction evidence="1">
        <text>L-glutamyl-tRNA(Gln) + L-glutamine + ATP + H2O = L-glutaminyl-tRNA(Gln) + L-glutamate + ADP + phosphate + H(+)</text>
        <dbReference type="Rhea" id="RHEA:17521"/>
        <dbReference type="Rhea" id="RHEA-COMP:9681"/>
        <dbReference type="Rhea" id="RHEA-COMP:9684"/>
        <dbReference type="ChEBI" id="CHEBI:15377"/>
        <dbReference type="ChEBI" id="CHEBI:15378"/>
        <dbReference type="ChEBI" id="CHEBI:29985"/>
        <dbReference type="ChEBI" id="CHEBI:30616"/>
        <dbReference type="ChEBI" id="CHEBI:43474"/>
        <dbReference type="ChEBI" id="CHEBI:58359"/>
        <dbReference type="ChEBI" id="CHEBI:78520"/>
        <dbReference type="ChEBI" id="CHEBI:78521"/>
        <dbReference type="ChEBI" id="CHEBI:456216"/>
    </reaction>
</comment>
<comment type="catalytic activity">
    <reaction evidence="1">
        <text>L-aspartyl-tRNA(Asn) + L-glutamine + ATP + H2O = L-asparaginyl-tRNA(Asn) + L-glutamate + ADP + phosphate + 2 H(+)</text>
        <dbReference type="Rhea" id="RHEA:14513"/>
        <dbReference type="Rhea" id="RHEA-COMP:9674"/>
        <dbReference type="Rhea" id="RHEA-COMP:9677"/>
        <dbReference type="ChEBI" id="CHEBI:15377"/>
        <dbReference type="ChEBI" id="CHEBI:15378"/>
        <dbReference type="ChEBI" id="CHEBI:29985"/>
        <dbReference type="ChEBI" id="CHEBI:30616"/>
        <dbReference type="ChEBI" id="CHEBI:43474"/>
        <dbReference type="ChEBI" id="CHEBI:58359"/>
        <dbReference type="ChEBI" id="CHEBI:78515"/>
        <dbReference type="ChEBI" id="CHEBI:78516"/>
        <dbReference type="ChEBI" id="CHEBI:456216"/>
    </reaction>
</comment>
<comment type="subunit">
    <text evidence="1">Heterotrimer of A, B and C subunits.</text>
</comment>
<comment type="similarity">
    <text evidence="1">Belongs to the GatC family.</text>
</comment>
<accession>C1FLE0</accession>
<evidence type="ECO:0000255" key="1">
    <source>
        <dbReference type="HAMAP-Rule" id="MF_00122"/>
    </source>
</evidence>
<name>GATC_CLOBJ</name>
<feature type="chain" id="PRO_1000122561" description="Aspartyl/glutamyl-tRNA(Asn/Gln) amidotransferase subunit C">
    <location>
        <begin position="1"/>
        <end position="95"/>
    </location>
</feature>
<reference key="1">
    <citation type="submission" date="2008-10" db="EMBL/GenBank/DDBJ databases">
        <title>Genome sequence of Clostridium botulinum A2 Kyoto.</title>
        <authorList>
            <person name="Shrivastava S."/>
            <person name="Brinkac L.M."/>
            <person name="Brown J.L."/>
            <person name="Bruce D."/>
            <person name="Detter C.C."/>
            <person name="Johnson E.A."/>
            <person name="Munk C.A."/>
            <person name="Smith L.A."/>
            <person name="Smith T.J."/>
            <person name="Sutton G."/>
            <person name="Brettin T.S."/>
        </authorList>
    </citation>
    <scope>NUCLEOTIDE SEQUENCE [LARGE SCALE GENOMIC DNA]</scope>
    <source>
        <strain>Kyoto / Type A2</strain>
    </source>
</reference>
<gene>
    <name evidence="1" type="primary">gatC</name>
    <name type="ordered locus">CLM_3701</name>
</gene>
<keyword id="KW-0067">ATP-binding</keyword>
<keyword id="KW-0436">Ligase</keyword>
<keyword id="KW-0547">Nucleotide-binding</keyword>
<keyword id="KW-0648">Protein biosynthesis</keyword>
<proteinExistence type="inferred from homology"/>